<comment type="function">
    <text evidence="1">Can catalyze the hydrolysis of ATP in the presence of single-stranded DNA, the ATP-dependent uptake of single-stranded DNA by duplex DNA, and the ATP-dependent hybridization of homologous single-stranded DNAs. It interacts with LexA causing its activation and leading to its autocatalytic cleavage.</text>
</comment>
<comment type="subcellular location">
    <subcellularLocation>
        <location evidence="1">Cytoplasm</location>
    </subcellularLocation>
</comment>
<comment type="similarity">
    <text evidence="1">Belongs to the RecA family.</text>
</comment>
<organism>
    <name type="scientific">Alteromonas mediterranea (strain DSM 17117 / CIP 110805 / LMG 28347 / Deep ecotype)</name>
    <dbReference type="NCBI Taxonomy" id="1774373"/>
    <lineage>
        <taxon>Bacteria</taxon>
        <taxon>Pseudomonadati</taxon>
        <taxon>Pseudomonadota</taxon>
        <taxon>Gammaproteobacteria</taxon>
        <taxon>Alteromonadales</taxon>
        <taxon>Alteromonadaceae</taxon>
        <taxon>Alteromonas/Salinimonas group</taxon>
        <taxon>Alteromonas</taxon>
    </lineage>
</organism>
<dbReference type="EMBL" id="CP001103">
    <property type="protein sequence ID" value="AEA97093.1"/>
    <property type="molecule type" value="Genomic_DNA"/>
</dbReference>
<dbReference type="RefSeq" id="WP_012517447.1">
    <property type="nucleotide sequence ID" value="NC_011138.3"/>
</dbReference>
<dbReference type="SMR" id="B4RVU1"/>
<dbReference type="GeneID" id="56341420"/>
<dbReference type="KEGG" id="amc:MADE_1004735"/>
<dbReference type="HOGENOM" id="CLU_040469_3_2_6"/>
<dbReference type="Proteomes" id="UP000001870">
    <property type="component" value="Chromosome"/>
</dbReference>
<dbReference type="GO" id="GO:0005829">
    <property type="term" value="C:cytosol"/>
    <property type="evidence" value="ECO:0007669"/>
    <property type="project" value="TreeGrafter"/>
</dbReference>
<dbReference type="GO" id="GO:0005524">
    <property type="term" value="F:ATP binding"/>
    <property type="evidence" value="ECO:0007669"/>
    <property type="project" value="UniProtKB-UniRule"/>
</dbReference>
<dbReference type="GO" id="GO:0016887">
    <property type="term" value="F:ATP hydrolysis activity"/>
    <property type="evidence" value="ECO:0007669"/>
    <property type="project" value="InterPro"/>
</dbReference>
<dbReference type="GO" id="GO:0140664">
    <property type="term" value="F:ATP-dependent DNA damage sensor activity"/>
    <property type="evidence" value="ECO:0007669"/>
    <property type="project" value="InterPro"/>
</dbReference>
<dbReference type="GO" id="GO:0003684">
    <property type="term" value="F:damaged DNA binding"/>
    <property type="evidence" value="ECO:0007669"/>
    <property type="project" value="UniProtKB-UniRule"/>
</dbReference>
<dbReference type="GO" id="GO:0003697">
    <property type="term" value="F:single-stranded DNA binding"/>
    <property type="evidence" value="ECO:0007669"/>
    <property type="project" value="UniProtKB-UniRule"/>
</dbReference>
<dbReference type="GO" id="GO:0006310">
    <property type="term" value="P:DNA recombination"/>
    <property type="evidence" value="ECO:0007669"/>
    <property type="project" value="UniProtKB-UniRule"/>
</dbReference>
<dbReference type="GO" id="GO:0006281">
    <property type="term" value="P:DNA repair"/>
    <property type="evidence" value="ECO:0007669"/>
    <property type="project" value="UniProtKB-UniRule"/>
</dbReference>
<dbReference type="GO" id="GO:0009432">
    <property type="term" value="P:SOS response"/>
    <property type="evidence" value="ECO:0007669"/>
    <property type="project" value="UniProtKB-UniRule"/>
</dbReference>
<dbReference type="CDD" id="cd00983">
    <property type="entry name" value="RecA"/>
    <property type="match status" value="1"/>
</dbReference>
<dbReference type="FunFam" id="3.40.50.300:FF:000087">
    <property type="entry name" value="Recombinase RecA"/>
    <property type="match status" value="1"/>
</dbReference>
<dbReference type="Gene3D" id="3.40.50.300">
    <property type="entry name" value="P-loop containing nucleotide triphosphate hydrolases"/>
    <property type="match status" value="1"/>
</dbReference>
<dbReference type="HAMAP" id="MF_00268">
    <property type="entry name" value="RecA"/>
    <property type="match status" value="1"/>
</dbReference>
<dbReference type="InterPro" id="IPR003593">
    <property type="entry name" value="AAA+_ATPase"/>
</dbReference>
<dbReference type="InterPro" id="IPR013765">
    <property type="entry name" value="DNA_recomb/repair_RecA"/>
</dbReference>
<dbReference type="InterPro" id="IPR020584">
    <property type="entry name" value="DNA_recomb/repair_RecA_CS"/>
</dbReference>
<dbReference type="InterPro" id="IPR027417">
    <property type="entry name" value="P-loop_NTPase"/>
</dbReference>
<dbReference type="InterPro" id="IPR049261">
    <property type="entry name" value="RecA-like_C"/>
</dbReference>
<dbReference type="InterPro" id="IPR049428">
    <property type="entry name" value="RecA-like_N"/>
</dbReference>
<dbReference type="InterPro" id="IPR020588">
    <property type="entry name" value="RecA_ATP-bd"/>
</dbReference>
<dbReference type="InterPro" id="IPR023400">
    <property type="entry name" value="RecA_C_sf"/>
</dbReference>
<dbReference type="InterPro" id="IPR020587">
    <property type="entry name" value="RecA_monomer-monomer_interface"/>
</dbReference>
<dbReference type="NCBIfam" id="TIGR02012">
    <property type="entry name" value="tigrfam_recA"/>
    <property type="match status" value="1"/>
</dbReference>
<dbReference type="PANTHER" id="PTHR45900:SF1">
    <property type="entry name" value="MITOCHONDRIAL DNA REPAIR PROTEIN RECA HOMOLOG-RELATED"/>
    <property type="match status" value="1"/>
</dbReference>
<dbReference type="PANTHER" id="PTHR45900">
    <property type="entry name" value="RECA"/>
    <property type="match status" value="1"/>
</dbReference>
<dbReference type="Pfam" id="PF00154">
    <property type="entry name" value="RecA"/>
    <property type="match status" value="1"/>
</dbReference>
<dbReference type="Pfam" id="PF21096">
    <property type="entry name" value="RecA_C"/>
    <property type="match status" value="1"/>
</dbReference>
<dbReference type="PRINTS" id="PR00142">
    <property type="entry name" value="RECA"/>
</dbReference>
<dbReference type="SMART" id="SM00382">
    <property type="entry name" value="AAA"/>
    <property type="match status" value="1"/>
</dbReference>
<dbReference type="SUPFAM" id="SSF52540">
    <property type="entry name" value="P-loop containing nucleoside triphosphate hydrolases"/>
    <property type="match status" value="1"/>
</dbReference>
<dbReference type="SUPFAM" id="SSF54752">
    <property type="entry name" value="RecA protein, C-terminal domain"/>
    <property type="match status" value="1"/>
</dbReference>
<dbReference type="PROSITE" id="PS00321">
    <property type="entry name" value="RECA_1"/>
    <property type="match status" value="1"/>
</dbReference>
<dbReference type="PROSITE" id="PS50162">
    <property type="entry name" value="RECA_2"/>
    <property type="match status" value="1"/>
</dbReference>
<dbReference type="PROSITE" id="PS50163">
    <property type="entry name" value="RECA_3"/>
    <property type="match status" value="1"/>
</dbReference>
<protein>
    <recommendedName>
        <fullName evidence="1">Protein RecA</fullName>
    </recommendedName>
    <alternativeName>
        <fullName evidence="1">Recombinase A</fullName>
    </alternativeName>
</protein>
<feature type="chain" id="PRO_1000114312" description="Protein RecA">
    <location>
        <begin position="1"/>
        <end position="348"/>
    </location>
</feature>
<feature type="binding site" evidence="1">
    <location>
        <begin position="65"/>
        <end position="72"/>
    </location>
    <ligand>
        <name>ATP</name>
        <dbReference type="ChEBI" id="CHEBI:30616"/>
    </ligand>
</feature>
<proteinExistence type="inferred from homology"/>
<evidence type="ECO:0000255" key="1">
    <source>
        <dbReference type="HAMAP-Rule" id="MF_00268"/>
    </source>
</evidence>
<reference key="1">
    <citation type="journal article" date="2008" name="ISME J.">
        <title>Comparative genomics of two ecotypes of the marine planktonic copiotroph Alteromonas macleodii suggests alternative lifestyles associated with different kinds of particulate organic matter.</title>
        <authorList>
            <person name="Ivars-Martinez E."/>
            <person name="Martin-Cuadrado A.-B."/>
            <person name="D'Auria G."/>
            <person name="Mira A."/>
            <person name="Ferriera S."/>
            <person name="Johnson J."/>
            <person name="Friedman R."/>
            <person name="Rodriguez-Valera F."/>
        </authorList>
    </citation>
    <scope>NUCLEOTIDE SEQUENCE [LARGE SCALE GENOMIC DNA]</scope>
    <source>
        <strain>DSM 17117 / CIP 110805 / LMG 28347 / Deep ecotype</strain>
    </source>
</reference>
<keyword id="KW-0067">ATP-binding</keyword>
<keyword id="KW-0963">Cytoplasm</keyword>
<keyword id="KW-0227">DNA damage</keyword>
<keyword id="KW-0233">DNA recombination</keyword>
<keyword id="KW-0234">DNA repair</keyword>
<keyword id="KW-0238">DNA-binding</keyword>
<keyword id="KW-0547">Nucleotide-binding</keyword>
<keyword id="KW-0742">SOS response</keyword>
<name>RECA_ALTMD</name>
<accession>B4RVU1</accession>
<accession>F2GBU2</accession>
<gene>
    <name evidence="1" type="primary">recA</name>
    <name type="ordered locus">MADE_1004735</name>
</gene>
<sequence>MDDNKSKALTAAVGQIEKQFGKGAIMRLGDNQAMDIEAISTGSLTIDIALGIGGLPCGRVVEIYGPESSGKTTLTLQVIAEAQKNGKTCAFVDAEHALDPVYAEKLGVNIDELLVSQPDTGEQALEICDMLVRSGAVDVVIVDSVAALTPKAEIEGDMGDSHVGLQARLMSQALRKLTANIKRSNTLCIFINQIRMKIGVMFGNPETTTGGNALKFYSSVRLDIRRIGAVKEGDEVVGNETRVKVVKNKVAPPFKQAEFMIRYGEGISKEAELIDLGVKQKLVDKAGAWYSYKGDRIGQGKANVMKYLKEHPETANEIETKIRQELLLSKTVKAEEALPQGEDDVLPE</sequence>